<accession>B0BU33</accession>
<evidence type="ECO:0000255" key="1">
    <source>
        <dbReference type="HAMAP-Rule" id="MF_01862"/>
    </source>
</evidence>
<keyword id="KW-0963">Cytoplasm</keyword>
<keyword id="KW-0489">Methyltransferase</keyword>
<keyword id="KW-0698">rRNA processing</keyword>
<keyword id="KW-0949">S-adenosyl-L-methionine</keyword>
<keyword id="KW-0808">Transferase</keyword>
<comment type="function">
    <text evidence="1">Specifically methylates the guanine in position 1207 of 16S rRNA in the 30S particle.</text>
</comment>
<comment type="catalytic activity">
    <reaction evidence="1">
        <text>guanosine(1207) in 16S rRNA + S-adenosyl-L-methionine = N(2)-methylguanosine(1207) in 16S rRNA + S-adenosyl-L-homocysteine + H(+)</text>
        <dbReference type="Rhea" id="RHEA:42736"/>
        <dbReference type="Rhea" id="RHEA-COMP:10213"/>
        <dbReference type="Rhea" id="RHEA-COMP:10214"/>
        <dbReference type="ChEBI" id="CHEBI:15378"/>
        <dbReference type="ChEBI" id="CHEBI:57856"/>
        <dbReference type="ChEBI" id="CHEBI:59789"/>
        <dbReference type="ChEBI" id="CHEBI:74269"/>
        <dbReference type="ChEBI" id="CHEBI:74481"/>
        <dbReference type="EC" id="2.1.1.172"/>
    </reaction>
</comment>
<comment type="subunit">
    <text evidence="1">Monomer.</text>
</comment>
<comment type="subcellular location">
    <subcellularLocation>
        <location evidence="1">Cytoplasm</location>
    </subcellularLocation>
</comment>
<comment type="similarity">
    <text evidence="1">Belongs to the methyltransferase superfamily. RsmC family.</text>
</comment>
<dbReference type="EC" id="2.1.1.172" evidence="1"/>
<dbReference type="EMBL" id="CP000687">
    <property type="protein sequence ID" value="ABY70600.1"/>
    <property type="molecule type" value="Genomic_DNA"/>
</dbReference>
<dbReference type="RefSeq" id="WP_012263480.1">
    <property type="nucleotide sequence ID" value="NC_010278.1"/>
</dbReference>
<dbReference type="SMR" id="B0BU33"/>
<dbReference type="KEGG" id="apj:APJL_2055"/>
<dbReference type="HOGENOM" id="CLU_049581_0_1_6"/>
<dbReference type="Proteomes" id="UP000008547">
    <property type="component" value="Chromosome"/>
</dbReference>
<dbReference type="GO" id="GO:0005737">
    <property type="term" value="C:cytoplasm"/>
    <property type="evidence" value="ECO:0007669"/>
    <property type="project" value="UniProtKB-SubCell"/>
</dbReference>
<dbReference type="GO" id="GO:0052914">
    <property type="term" value="F:16S rRNA (guanine(1207)-N(2))-methyltransferase activity"/>
    <property type="evidence" value="ECO:0007669"/>
    <property type="project" value="UniProtKB-EC"/>
</dbReference>
<dbReference type="GO" id="GO:0003676">
    <property type="term" value="F:nucleic acid binding"/>
    <property type="evidence" value="ECO:0007669"/>
    <property type="project" value="InterPro"/>
</dbReference>
<dbReference type="CDD" id="cd02440">
    <property type="entry name" value="AdoMet_MTases"/>
    <property type="match status" value="1"/>
</dbReference>
<dbReference type="Gene3D" id="3.40.50.150">
    <property type="entry name" value="Vaccinia Virus protein VP39"/>
    <property type="match status" value="2"/>
</dbReference>
<dbReference type="HAMAP" id="MF_01862">
    <property type="entry name" value="16SrRNA_methyltr_C"/>
    <property type="match status" value="1"/>
</dbReference>
<dbReference type="InterPro" id="IPR002052">
    <property type="entry name" value="DNA_methylase_N6_adenine_CS"/>
</dbReference>
<dbReference type="InterPro" id="IPR013675">
    <property type="entry name" value="Mtase_sm_N"/>
</dbReference>
<dbReference type="InterPro" id="IPR023543">
    <property type="entry name" value="rRNA_ssu_MeTfrase_C"/>
</dbReference>
<dbReference type="InterPro" id="IPR046977">
    <property type="entry name" value="RsmC/RlmG"/>
</dbReference>
<dbReference type="InterPro" id="IPR029063">
    <property type="entry name" value="SAM-dependent_MTases_sf"/>
</dbReference>
<dbReference type="InterPro" id="IPR007848">
    <property type="entry name" value="Small_mtfrase_dom"/>
</dbReference>
<dbReference type="NCBIfam" id="NF007023">
    <property type="entry name" value="PRK09489.1"/>
    <property type="match status" value="1"/>
</dbReference>
<dbReference type="PANTHER" id="PTHR47816">
    <property type="entry name" value="RIBOSOMAL RNA SMALL SUBUNIT METHYLTRANSFERASE C"/>
    <property type="match status" value="1"/>
</dbReference>
<dbReference type="PANTHER" id="PTHR47816:SF4">
    <property type="entry name" value="RIBOSOMAL RNA SMALL SUBUNIT METHYLTRANSFERASE C"/>
    <property type="match status" value="1"/>
</dbReference>
<dbReference type="Pfam" id="PF05175">
    <property type="entry name" value="MTS"/>
    <property type="match status" value="1"/>
</dbReference>
<dbReference type="Pfam" id="PF08468">
    <property type="entry name" value="MTS_N"/>
    <property type="match status" value="1"/>
</dbReference>
<dbReference type="SUPFAM" id="SSF53335">
    <property type="entry name" value="S-adenosyl-L-methionine-dependent methyltransferases"/>
    <property type="match status" value="1"/>
</dbReference>
<name>RSMC_ACTPJ</name>
<gene>
    <name evidence="1" type="primary">rsmC</name>
    <name type="ordered locus">APJL_2055</name>
</gene>
<protein>
    <recommendedName>
        <fullName evidence="1">Ribosomal RNA small subunit methyltransferase C</fullName>
        <ecNumber evidence="1">2.1.1.172</ecNumber>
    </recommendedName>
    <alternativeName>
        <fullName evidence="1">16S rRNA m2G1207 methyltransferase</fullName>
    </alternativeName>
    <alternativeName>
        <fullName evidence="1">rRNA (guanine-N(2)-)-methyltransferase RsmC</fullName>
    </alternativeName>
</protein>
<sequence>MLSLESEVLTRHLPLFANKSILLFGDVRDRFADQIKANAKSVAVFSSYFDYARQYADVSFGLYCEIKAELAVFYWTKNKQECQYQLLQWLSQVDVGQEMLIIGENRAGVRSVEKLLEPYGNIAKIDSARRCGLYHFELQSVPDFDGKKFWKSYRLQDLNIFALPAVFSSAELDGGTQLLLSTFNKADRLKGKVLDLGCGAGVIGASLKQQFEKIKLTMSDIHAMALESSRHTLAENALDGTVVASDVFSNIEERFDLIVSNPPFHDGIDTAYRAVEDLIAQAKQRLNRGGELRIVANAFLPYPDLLDKAFGSHQVIAKSNKFKVYSAKA</sequence>
<reference key="1">
    <citation type="journal article" date="2008" name="PLoS ONE">
        <title>Genome biology of Actinobacillus pleuropneumoniae JL03, an isolate of serotype 3 prevalent in China.</title>
        <authorList>
            <person name="Xu Z."/>
            <person name="Zhou Y."/>
            <person name="Li L."/>
            <person name="Zhou R."/>
            <person name="Xiao S."/>
            <person name="Wan Y."/>
            <person name="Zhang S."/>
            <person name="Wang K."/>
            <person name="Li W."/>
            <person name="Li L."/>
            <person name="Jin H."/>
            <person name="Kang M."/>
            <person name="Dalai B."/>
            <person name="Li T."/>
            <person name="Liu L."/>
            <person name="Cheng Y."/>
            <person name="Zhang L."/>
            <person name="Xu T."/>
            <person name="Zheng H."/>
            <person name="Pu S."/>
            <person name="Wang B."/>
            <person name="Gu W."/>
            <person name="Zhang X.L."/>
            <person name="Zhu G.-F."/>
            <person name="Wang S."/>
            <person name="Zhao G.-P."/>
            <person name="Chen H."/>
        </authorList>
    </citation>
    <scope>NUCLEOTIDE SEQUENCE [LARGE SCALE GENOMIC DNA]</scope>
    <source>
        <strain>JL03</strain>
    </source>
</reference>
<feature type="chain" id="PRO_0000369681" description="Ribosomal RNA small subunit methyltransferase C">
    <location>
        <begin position="1"/>
        <end position="329"/>
    </location>
</feature>
<proteinExistence type="inferred from homology"/>
<organism>
    <name type="scientific">Actinobacillus pleuropneumoniae serotype 3 (strain JL03)</name>
    <dbReference type="NCBI Taxonomy" id="434271"/>
    <lineage>
        <taxon>Bacteria</taxon>
        <taxon>Pseudomonadati</taxon>
        <taxon>Pseudomonadota</taxon>
        <taxon>Gammaproteobacteria</taxon>
        <taxon>Pasteurellales</taxon>
        <taxon>Pasteurellaceae</taxon>
        <taxon>Actinobacillus</taxon>
    </lineage>
</organism>